<dbReference type="EC" id="3.5.99.6" evidence="1"/>
<dbReference type="EMBL" id="CP000243">
    <property type="protein sequence ID" value="ABE06165.1"/>
    <property type="molecule type" value="Genomic_DNA"/>
</dbReference>
<dbReference type="RefSeq" id="WP_001237072.1">
    <property type="nucleotide sequence ID" value="NZ_CP064825.1"/>
</dbReference>
<dbReference type="SMR" id="Q1REP9"/>
<dbReference type="GeneID" id="93776807"/>
<dbReference type="KEGG" id="eci:UTI89_C0672"/>
<dbReference type="HOGENOM" id="CLU_049611_0_1_6"/>
<dbReference type="UniPathway" id="UPA00629">
    <property type="reaction ID" value="UER00684"/>
</dbReference>
<dbReference type="Proteomes" id="UP000001952">
    <property type="component" value="Chromosome"/>
</dbReference>
<dbReference type="GO" id="GO:0005829">
    <property type="term" value="C:cytosol"/>
    <property type="evidence" value="ECO:0007669"/>
    <property type="project" value="TreeGrafter"/>
</dbReference>
<dbReference type="GO" id="GO:0004342">
    <property type="term" value="F:glucosamine-6-phosphate deaminase activity"/>
    <property type="evidence" value="ECO:0007669"/>
    <property type="project" value="UniProtKB-UniRule"/>
</dbReference>
<dbReference type="GO" id="GO:0042802">
    <property type="term" value="F:identical protein binding"/>
    <property type="evidence" value="ECO:0007669"/>
    <property type="project" value="TreeGrafter"/>
</dbReference>
<dbReference type="GO" id="GO:0005975">
    <property type="term" value="P:carbohydrate metabolic process"/>
    <property type="evidence" value="ECO:0007669"/>
    <property type="project" value="InterPro"/>
</dbReference>
<dbReference type="GO" id="GO:0006043">
    <property type="term" value="P:glucosamine catabolic process"/>
    <property type="evidence" value="ECO:0007669"/>
    <property type="project" value="TreeGrafter"/>
</dbReference>
<dbReference type="GO" id="GO:0006046">
    <property type="term" value="P:N-acetylglucosamine catabolic process"/>
    <property type="evidence" value="ECO:0007669"/>
    <property type="project" value="TreeGrafter"/>
</dbReference>
<dbReference type="GO" id="GO:0019262">
    <property type="term" value="P:N-acetylneuraminate catabolic process"/>
    <property type="evidence" value="ECO:0007669"/>
    <property type="project" value="UniProtKB-UniRule"/>
</dbReference>
<dbReference type="CDD" id="cd01399">
    <property type="entry name" value="GlcN6P_deaminase"/>
    <property type="match status" value="1"/>
</dbReference>
<dbReference type="FunFam" id="3.40.50.1360:FF:000002">
    <property type="entry name" value="Glucosamine-6-phosphate deaminase"/>
    <property type="match status" value="1"/>
</dbReference>
<dbReference type="Gene3D" id="3.40.50.1360">
    <property type="match status" value="1"/>
</dbReference>
<dbReference type="HAMAP" id="MF_01241">
    <property type="entry name" value="GlcN6P_deamin"/>
    <property type="match status" value="1"/>
</dbReference>
<dbReference type="InterPro" id="IPR006148">
    <property type="entry name" value="Glc/Gal-6P_isomerase"/>
</dbReference>
<dbReference type="InterPro" id="IPR004547">
    <property type="entry name" value="Glucosamine6P_isomerase"/>
</dbReference>
<dbReference type="InterPro" id="IPR018321">
    <property type="entry name" value="Glucosamine6P_isomerase_CS"/>
</dbReference>
<dbReference type="InterPro" id="IPR037171">
    <property type="entry name" value="NagB/RpiA_transferase-like"/>
</dbReference>
<dbReference type="NCBIfam" id="TIGR00502">
    <property type="entry name" value="nagB"/>
    <property type="match status" value="1"/>
</dbReference>
<dbReference type="NCBIfam" id="NF001685">
    <property type="entry name" value="PRK00443.1-5"/>
    <property type="match status" value="1"/>
</dbReference>
<dbReference type="PANTHER" id="PTHR11280">
    <property type="entry name" value="GLUCOSAMINE-6-PHOSPHATE ISOMERASE"/>
    <property type="match status" value="1"/>
</dbReference>
<dbReference type="PANTHER" id="PTHR11280:SF5">
    <property type="entry name" value="GLUCOSAMINE-6-PHOSPHATE ISOMERASE"/>
    <property type="match status" value="1"/>
</dbReference>
<dbReference type="Pfam" id="PF01182">
    <property type="entry name" value="Glucosamine_iso"/>
    <property type="match status" value="1"/>
</dbReference>
<dbReference type="SUPFAM" id="SSF100950">
    <property type="entry name" value="NagB/RpiA/CoA transferase-like"/>
    <property type="match status" value="1"/>
</dbReference>
<dbReference type="PROSITE" id="PS01161">
    <property type="entry name" value="GLC_GALNAC_ISOMERASE"/>
    <property type="match status" value="1"/>
</dbReference>
<accession>Q1REP9</accession>
<protein>
    <recommendedName>
        <fullName evidence="1">Glucosamine-6-phosphate deaminase</fullName>
        <ecNumber evidence="1">3.5.99.6</ecNumber>
    </recommendedName>
    <alternativeName>
        <fullName evidence="1">GlcN6P deaminase</fullName>
        <shortName evidence="1">GNPDA</shortName>
    </alternativeName>
    <alternativeName>
        <fullName evidence="1">Glucosamine-6-phosphate isomerase</fullName>
    </alternativeName>
</protein>
<gene>
    <name evidence="1" type="primary">nagB</name>
    <name type="ordered locus">UTI89_C0672</name>
</gene>
<reference key="1">
    <citation type="journal article" date="2006" name="Proc. Natl. Acad. Sci. U.S.A.">
        <title>Identification of genes subject to positive selection in uropathogenic strains of Escherichia coli: a comparative genomics approach.</title>
        <authorList>
            <person name="Chen S.L."/>
            <person name="Hung C.-S."/>
            <person name="Xu J."/>
            <person name="Reigstad C.S."/>
            <person name="Magrini V."/>
            <person name="Sabo A."/>
            <person name="Blasiar D."/>
            <person name="Bieri T."/>
            <person name="Meyer R.R."/>
            <person name="Ozersky P."/>
            <person name="Armstrong J.R."/>
            <person name="Fulton R.S."/>
            <person name="Latreille J.P."/>
            <person name="Spieth J."/>
            <person name="Hooton T.M."/>
            <person name="Mardis E.R."/>
            <person name="Hultgren S.J."/>
            <person name="Gordon J.I."/>
        </authorList>
    </citation>
    <scope>NUCLEOTIDE SEQUENCE [LARGE SCALE GENOMIC DNA]</scope>
    <source>
        <strain>UTI89 / UPEC</strain>
    </source>
</reference>
<organism>
    <name type="scientific">Escherichia coli (strain UTI89 / UPEC)</name>
    <dbReference type="NCBI Taxonomy" id="364106"/>
    <lineage>
        <taxon>Bacteria</taxon>
        <taxon>Pseudomonadati</taxon>
        <taxon>Pseudomonadota</taxon>
        <taxon>Gammaproteobacteria</taxon>
        <taxon>Enterobacterales</taxon>
        <taxon>Enterobacteriaceae</taxon>
        <taxon>Escherichia</taxon>
    </lineage>
</organism>
<evidence type="ECO:0000255" key="1">
    <source>
        <dbReference type="HAMAP-Rule" id="MF_01241"/>
    </source>
</evidence>
<name>NAGB_ECOUT</name>
<sequence>MRLIPLTTAEQVGKWAARHIVNRINAFKPTADRPFVLGLPTGGTPMTTYKALVEMHKAGQVSFKHVVTFNMDEYVGLPKEHPESYYSFMHRNFFDHVDIPAENINLLNGNAPDIDAECRQYEEKIRSYGKIHLFMGGVGNDGHIAFNEPASSLASRTRIKTLTHDTRVANSRFFDNDVNQVPKYALTVGVGTLLDAEEVMILVLGSQKALALQAAVEGCVNHMWTISCLQLHPKAIMVCDEPSTMELKVKTLRYFNELEAENIKGL</sequence>
<keyword id="KW-0021">Allosteric enzyme</keyword>
<keyword id="KW-0119">Carbohydrate metabolism</keyword>
<keyword id="KW-1015">Disulfide bond</keyword>
<keyword id="KW-0378">Hydrolase</keyword>
<proteinExistence type="inferred from homology"/>
<feature type="chain" id="PRO_1000066981" description="Glucosamine-6-phosphate deaminase">
    <location>
        <begin position="1"/>
        <end position="266"/>
    </location>
</feature>
<feature type="active site" description="Proton acceptor; for enolization step" evidence="1">
    <location>
        <position position="72"/>
    </location>
</feature>
<feature type="active site" description="For ring-opening step" evidence="1">
    <location>
        <position position="141"/>
    </location>
</feature>
<feature type="active site" description="Proton acceptor; for ring-opening step" evidence="1">
    <location>
        <position position="143"/>
    </location>
</feature>
<feature type="active site" description="For ring-opening step" evidence="1">
    <location>
        <position position="148"/>
    </location>
</feature>
<feature type="site" description="Part of the allosteric site" evidence="1">
    <location>
        <position position="151"/>
    </location>
</feature>
<feature type="site" description="Part of the allosteric site" evidence="1">
    <location>
        <position position="158"/>
    </location>
</feature>
<feature type="site" description="Part of the allosteric site" evidence="1">
    <location>
        <position position="160"/>
    </location>
</feature>
<feature type="site" description="Part of the allosteric site" evidence="1">
    <location>
        <position position="161"/>
    </location>
</feature>
<feature type="site" description="Part of the allosteric site" evidence="1">
    <location>
        <position position="254"/>
    </location>
</feature>
<feature type="disulfide bond" description="Interchain" evidence="1">
    <location>
        <position position="219"/>
    </location>
</feature>
<comment type="function">
    <text evidence="1">Catalyzes the reversible isomerization-deamination of glucosamine 6-phosphate (GlcN6P) to form fructose 6-phosphate (Fru6P) and ammonium ion.</text>
</comment>
<comment type="catalytic activity">
    <reaction evidence="1">
        <text>alpha-D-glucosamine 6-phosphate + H2O = beta-D-fructose 6-phosphate + NH4(+)</text>
        <dbReference type="Rhea" id="RHEA:12172"/>
        <dbReference type="ChEBI" id="CHEBI:15377"/>
        <dbReference type="ChEBI" id="CHEBI:28938"/>
        <dbReference type="ChEBI" id="CHEBI:57634"/>
        <dbReference type="ChEBI" id="CHEBI:75989"/>
        <dbReference type="EC" id="3.5.99.6"/>
    </reaction>
</comment>
<comment type="activity regulation">
    <text evidence="1">Allosterically activated by N-acetylglucosamine 6-phosphate (GlcNAc6P).</text>
</comment>
<comment type="pathway">
    <text evidence="1">Amino-sugar metabolism; N-acetylneuraminate degradation; D-fructose 6-phosphate from N-acetylneuraminate: step 5/5.</text>
</comment>
<comment type="subunit">
    <text evidence="1">Homohexamer; trimer of disulfide-linked dimers.</text>
</comment>
<comment type="similarity">
    <text evidence="1">Belongs to the glucosamine/galactosamine-6-phosphate isomerase family. NagB subfamily.</text>
</comment>